<accession>C3K6Y4</accession>
<organism>
    <name type="scientific">Pseudomonas fluorescens (strain SBW25)</name>
    <dbReference type="NCBI Taxonomy" id="216595"/>
    <lineage>
        <taxon>Bacteria</taxon>
        <taxon>Pseudomonadati</taxon>
        <taxon>Pseudomonadota</taxon>
        <taxon>Gammaproteobacteria</taxon>
        <taxon>Pseudomonadales</taxon>
        <taxon>Pseudomonadaceae</taxon>
        <taxon>Pseudomonas</taxon>
    </lineage>
</organism>
<evidence type="ECO:0000255" key="1">
    <source>
        <dbReference type="HAMAP-Rule" id="MF_00120"/>
    </source>
</evidence>
<dbReference type="EC" id="6.3.5.7" evidence="1"/>
<dbReference type="EMBL" id="AM181176">
    <property type="protein sequence ID" value="CAY47128.1"/>
    <property type="molecule type" value="Genomic_DNA"/>
</dbReference>
<dbReference type="RefSeq" id="WP_012722222.1">
    <property type="nucleotide sequence ID" value="NC_012660.1"/>
</dbReference>
<dbReference type="SMR" id="C3K6Y4"/>
<dbReference type="STRING" id="294.SRM1_00883"/>
<dbReference type="GeneID" id="93462484"/>
<dbReference type="PATRIC" id="fig|216595.4.peg.1097"/>
<dbReference type="eggNOG" id="COG0154">
    <property type="taxonomic scope" value="Bacteria"/>
</dbReference>
<dbReference type="HOGENOM" id="CLU_009600_0_3_6"/>
<dbReference type="OrthoDB" id="9811471at2"/>
<dbReference type="GO" id="GO:0030956">
    <property type="term" value="C:glutamyl-tRNA(Gln) amidotransferase complex"/>
    <property type="evidence" value="ECO:0007669"/>
    <property type="project" value="InterPro"/>
</dbReference>
<dbReference type="GO" id="GO:0005524">
    <property type="term" value="F:ATP binding"/>
    <property type="evidence" value="ECO:0007669"/>
    <property type="project" value="UniProtKB-KW"/>
</dbReference>
<dbReference type="GO" id="GO:0050567">
    <property type="term" value="F:glutaminyl-tRNA synthase (glutamine-hydrolyzing) activity"/>
    <property type="evidence" value="ECO:0007669"/>
    <property type="project" value="UniProtKB-UniRule"/>
</dbReference>
<dbReference type="GO" id="GO:0006412">
    <property type="term" value="P:translation"/>
    <property type="evidence" value="ECO:0007669"/>
    <property type="project" value="UniProtKB-UniRule"/>
</dbReference>
<dbReference type="Gene3D" id="3.90.1300.10">
    <property type="entry name" value="Amidase signature (AS) domain"/>
    <property type="match status" value="1"/>
</dbReference>
<dbReference type="HAMAP" id="MF_00120">
    <property type="entry name" value="GatA"/>
    <property type="match status" value="1"/>
</dbReference>
<dbReference type="InterPro" id="IPR000120">
    <property type="entry name" value="Amidase"/>
</dbReference>
<dbReference type="InterPro" id="IPR020556">
    <property type="entry name" value="Amidase_CS"/>
</dbReference>
<dbReference type="InterPro" id="IPR023631">
    <property type="entry name" value="Amidase_dom"/>
</dbReference>
<dbReference type="InterPro" id="IPR036928">
    <property type="entry name" value="AS_sf"/>
</dbReference>
<dbReference type="InterPro" id="IPR004412">
    <property type="entry name" value="GatA"/>
</dbReference>
<dbReference type="NCBIfam" id="TIGR00132">
    <property type="entry name" value="gatA"/>
    <property type="match status" value="1"/>
</dbReference>
<dbReference type="PANTHER" id="PTHR11895:SF151">
    <property type="entry name" value="GLUTAMYL-TRNA(GLN) AMIDOTRANSFERASE SUBUNIT A"/>
    <property type="match status" value="1"/>
</dbReference>
<dbReference type="PANTHER" id="PTHR11895">
    <property type="entry name" value="TRANSAMIDASE"/>
    <property type="match status" value="1"/>
</dbReference>
<dbReference type="Pfam" id="PF01425">
    <property type="entry name" value="Amidase"/>
    <property type="match status" value="1"/>
</dbReference>
<dbReference type="SUPFAM" id="SSF75304">
    <property type="entry name" value="Amidase signature (AS) enzymes"/>
    <property type="match status" value="1"/>
</dbReference>
<dbReference type="PROSITE" id="PS00571">
    <property type="entry name" value="AMIDASES"/>
    <property type="match status" value="1"/>
</dbReference>
<protein>
    <recommendedName>
        <fullName evidence="1">Glutamyl-tRNA(Gln) amidotransferase subunit A</fullName>
        <shortName evidence="1">Glu-ADT subunit A</shortName>
        <ecNumber evidence="1">6.3.5.7</ecNumber>
    </recommendedName>
</protein>
<keyword id="KW-0067">ATP-binding</keyword>
<keyword id="KW-0436">Ligase</keyword>
<keyword id="KW-0547">Nucleotide-binding</keyword>
<keyword id="KW-0648">Protein biosynthesis</keyword>
<sequence length="483" mass="51770">MHHMTLAEIARGLADKKFSSEELTKTLLARIAEHDPKVNSFISLTEELALSQAKAADARRANGEQGALLGAPIAHKDLFCTQGIRTSCGSKMLDNFKAPYDATVVSKLAAAGAVTLGKTNMDEFAMGSANESSYYGAVKNPWNLDHVPGGSSGGSAAAVAARFLPAATATDTGGSIRQPAAFTNLTGLKPTYGRVSRWGMIAYASSLDQGGPLARTAEDCAILLQGMAGFDKQDSTSIDEPVPDYSASLNTSIKGLRIGVPKEYFSAGLDPRIAELVHNSVKTLEGLGAVIKEISLPNNQHAIPAYYVIAPAEASSNLSRFDGVRFGYRCENPKDLTDLYKRSRGEGFGAEVQRRIMVGAYALSAGYYDAYYLKAQKIRRLIKNDFMAAFEEVDVILGPTTPNPAWKIGAKTGDPIAEYLEDLYTITANLAGLPGLSMPAGFVDGLPVGVQLLAPYFQEGRLLNVAHQYQLNTDWHTRTPTGF</sequence>
<name>GATA_PSEFS</name>
<gene>
    <name evidence="1" type="primary">gatA</name>
    <name type="ordered locus">PFLU_0861</name>
</gene>
<reference key="1">
    <citation type="journal article" date="2009" name="Genome Biol.">
        <title>Genomic and genetic analyses of diversity and plant interactions of Pseudomonas fluorescens.</title>
        <authorList>
            <person name="Silby M.W."/>
            <person name="Cerdeno-Tarraga A.M."/>
            <person name="Vernikos G.S."/>
            <person name="Giddens S.R."/>
            <person name="Jackson R.W."/>
            <person name="Preston G.M."/>
            <person name="Zhang X.-X."/>
            <person name="Moon C.D."/>
            <person name="Gehrig S.M."/>
            <person name="Godfrey S.A.C."/>
            <person name="Knight C.G."/>
            <person name="Malone J.G."/>
            <person name="Robinson Z."/>
            <person name="Spiers A.J."/>
            <person name="Harris S."/>
            <person name="Challis G.L."/>
            <person name="Yaxley A.M."/>
            <person name="Harris D."/>
            <person name="Seeger K."/>
            <person name="Murphy L."/>
            <person name="Rutter S."/>
            <person name="Squares R."/>
            <person name="Quail M.A."/>
            <person name="Saunders E."/>
            <person name="Mavromatis K."/>
            <person name="Brettin T.S."/>
            <person name="Bentley S.D."/>
            <person name="Hothersall J."/>
            <person name="Stephens E."/>
            <person name="Thomas C.M."/>
            <person name="Parkhill J."/>
            <person name="Levy S.B."/>
            <person name="Rainey P.B."/>
            <person name="Thomson N.R."/>
        </authorList>
    </citation>
    <scope>NUCLEOTIDE SEQUENCE [LARGE SCALE GENOMIC DNA]</scope>
    <source>
        <strain>SBW25</strain>
    </source>
</reference>
<comment type="function">
    <text evidence="1">Allows the formation of correctly charged Gln-tRNA(Gln) through the transamidation of misacylated Glu-tRNA(Gln) in organisms which lack glutaminyl-tRNA synthetase. The reaction takes place in the presence of glutamine and ATP through an activated gamma-phospho-Glu-tRNA(Gln).</text>
</comment>
<comment type="catalytic activity">
    <reaction evidence="1">
        <text>L-glutamyl-tRNA(Gln) + L-glutamine + ATP + H2O = L-glutaminyl-tRNA(Gln) + L-glutamate + ADP + phosphate + H(+)</text>
        <dbReference type="Rhea" id="RHEA:17521"/>
        <dbReference type="Rhea" id="RHEA-COMP:9681"/>
        <dbReference type="Rhea" id="RHEA-COMP:9684"/>
        <dbReference type="ChEBI" id="CHEBI:15377"/>
        <dbReference type="ChEBI" id="CHEBI:15378"/>
        <dbReference type="ChEBI" id="CHEBI:29985"/>
        <dbReference type="ChEBI" id="CHEBI:30616"/>
        <dbReference type="ChEBI" id="CHEBI:43474"/>
        <dbReference type="ChEBI" id="CHEBI:58359"/>
        <dbReference type="ChEBI" id="CHEBI:78520"/>
        <dbReference type="ChEBI" id="CHEBI:78521"/>
        <dbReference type="ChEBI" id="CHEBI:456216"/>
        <dbReference type="EC" id="6.3.5.7"/>
    </reaction>
</comment>
<comment type="subunit">
    <text evidence="1">Heterotrimer of A, B and C subunits.</text>
</comment>
<comment type="similarity">
    <text evidence="1">Belongs to the amidase family. GatA subfamily.</text>
</comment>
<feature type="chain" id="PRO_1000203040" description="Glutamyl-tRNA(Gln) amidotransferase subunit A">
    <location>
        <begin position="1"/>
        <end position="483"/>
    </location>
</feature>
<feature type="active site" description="Charge relay system" evidence="1">
    <location>
        <position position="76"/>
    </location>
</feature>
<feature type="active site" description="Charge relay system" evidence="1">
    <location>
        <position position="151"/>
    </location>
</feature>
<feature type="active site" description="Acyl-ester intermediate" evidence="1">
    <location>
        <position position="175"/>
    </location>
</feature>
<proteinExistence type="inferred from homology"/>